<organism>
    <name type="scientific">Danio rerio</name>
    <name type="common">Zebrafish</name>
    <name type="synonym">Brachydanio rerio</name>
    <dbReference type="NCBI Taxonomy" id="7955"/>
    <lineage>
        <taxon>Eukaryota</taxon>
        <taxon>Metazoa</taxon>
        <taxon>Chordata</taxon>
        <taxon>Craniata</taxon>
        <taxon>Vertebrata</taxon>
        <taxon>Euteleostomi</taxon>
        <taxon>Actinopterygii</taxon>
        <taxon>Neopterygii</taxon>
        <taxon>Teleostei</taxon>
        <taxon>Ostariophysi</taxon>
        <taxon>Cypriniformes</taxon>
        <taxon>Danionidae</taxon>
        <taxon>Danioninae</taxon>
        <taxon>Danio</taxon>
    </lineage>
</organism>
<sequence length="353" mass="37980">MTLEAIRYRSGSLQILNQLLLPRETVYDEIRSVRDGYEAIKSMKVRGAPAIAIVGCLSLAVELRAGAGAEDLVSFVRDSLCHLTSARPTAVNMGRAARELMEFTENESMEKNTEQLRDSVIGWIEEMLERDVNDNKKIGNYGAQHILSGVPRDSVTILTHCNTGSLATAGYGTALGVVRSLHMLGRLKRLYCTETRPYNQGARLTAYEAVAEGFPATLITDSMAALAMREKSITAVVVGADRVVANGDTANKVGTYQLAIAAKHHGIPFYVAAPSTSCDLSLESGRDIVIEERPAEELTSINGVPVAAPGIDVWNPAFDVTPHQLITGGIITELGVFLPSELQAALTGRLTAL</sequence>
<proteinExistence type="evidence at transcript level"/>
<evidence type="ECO:0000255" key="1">
    <source>
        <dbReference type="HAMAP-Rule" id="MF_03119"/>
    </source>
</evidence>
<gene>
    <name type="primary">mri1</name>
    <name type="ORF">zgc:172216</name>
</gene>
<comment type="function">
    <text evidence="1">Catalyzes the interconversion of methylthioribose-1-phosphate (MTR-1-P) into methylthioribulose-1-phosphate (MTRu-1-P).</text>
</comment>
<comment type="catalytic activity">
    <reaction evidence="1">
        <text>5-(methylsulfanyl)-alpha-D-ribose 1-phosphate = 5-(methylsulfanyl)-D-ribulose 1-phosphate</text>
        <dbReference type="Rhea" id="RHEA:19989"/>
        <dbReference type="ChEBI" id="CHEBI:58533"/>
        <dbReference type="ChEBI" id="CHEBI:58548"/>
        <dbReference type="EC" id="5.3.1.23"/>
    </reaction>
</comment>
<comment type="pathway">
    <text evidence="1">Amino-acid biosynthesis; L-methionine biosynthesis via salvage pathway; L-methionine from S-methyl-5-thio-alpha-D-ribose 1-phosphate: step 1/6.</text>
</comment>
<comment type="subcellular location">
    <subcellularLocation>
        <location evidence="1">Cytoplasm</location>
    </subcellularLocation>
    <subcellularLocation>
        <location evidence="1">Nucleus</location>
    </subcellularLocation>
</comment>
<comment type="similarity">
    <text evidence="1">Belongs to the eIF-2B alpha/beta/delta subunits family. MtnA subfamily.</text>
</comment>
<accession>A9JRE2</accession>
<reference key="1">
    <citation type="submission" date="2007-12" db="EMBL/GenBank/DDBJ databases">
        <authorList>
            <consortium name="NIH - Zebrafish Gene Collection (ZGC) project"/>
        </authorList>
    </citation>
    <scope>NUCLEOTIDE SEQUENCE [LARGE SCALE MRNA]</scope>
    <source>
        <tissue>Ovary</tissue>
    </source>
</reference>
<dbReference type="EC" id="5.3.1.23" evidence="1"/>
<dbReference type="EMBL" id="BC155626">
    <property type="protein sequence ID" value="AAI55627.1"/>
    <property type="molecule type" value="mRNA"/>
</dbReference>
<dbReference type="EMBL" id="BC171374">
    <property type="protein sequence ID" value="AAI71374.1"/>
    <property type="molecule type" value="mRNA"/>
</dbReference>
<dbReference type="EMBL" id="BC171376">
    <property type="protein sequence ID" value="AAI71376.1"/>
    <property type="molecule type" value="mRNA"/>
</dbReference>
<dbReference type="RefSeq" id="NP_001104708.1">
    <property type="nucleotide sequence ID" value="NM_001111238.2"/>
</dbReference>
<dbReference type="SMR" id="A9JRE2"/>
<dbReference type="FunCoup" id="A9JRE2">
    <property type="interactions" value="1087"/>
</dbReference>
<dbReference type="STRING" id="7955.ENSDARP00000098757"/>
<dbReference type="PaxDb" id="7955-ENSDARP00000098757"/>
<dbReference type="PeptideAtlas" id="A9JRE2"/>
<dbReference type="Ensembl" id="ENSDART00000111671">
    <property type="protein sequence ID" value="ENSDARP00000098757"/>
    <property type="gene ID" value="ENSDARG00000075754"/>
</dbReference>
<dbReference type="GeneID" id="100002302"/>
<dbReference type="KEGG" id="dre:100002302"/>
<dbReference type="AGR" id="ZFIN:ZDB-GENE-080204-109"/>
<dbReference type="CTD" id="84245"/>
<dbReference type="ZFIN" id="ZDB-GENE-080204-109">
    <property type="gene designation" value="mri1"/>
</dbReference>
<dbReference type="eggNOG" id="KOG1468">
    <property type="taxonomic scope" value="Eukaryota"/>
</dbReference>
<dbReference type="HOGENOM" id="CLU_016218_1_3_1"/>
<dbReference type="InParanoid" id="A9JRE2"/>
<dbReference type="OMA" id="CETRPLN"/>
<dbReference type="OrthoDB" id="2461at2759"/>
<dbReference type="PhylomeDB" id="A9JRE2"/>
<dbReference type="TreeFam" id="TF300852"/>
<dbReference type="Reactome" id="R-DRE-1237112">
    <property type="pathway name" value="Methionine salvage pathway"/>
</dbReference>
<dbReference type="UniPathway" id="UPA00904">
    <property type="reaction ID" value="UER00874"/>
</dbReference>
<dbReference type="PRO" id="PR:A9JRE2"/>
<dbReference type="Proteomes" id="UP000000437">
    <property type="component" value="Chromosome 1"/>
</dbReference>
<dbReference type="Bgee" id="ENSDARG00000075754">
    <property type="expression patterns" value="Expressed in retina and 20 other cell types or tissues"/>
</dbReference>
<dbReference type="ExpressionAtlas" id="A9JRE2">
    <property type="expression patterns" value="baseline and differential"/>
</dbReference>
<dbReference type="GO" id="GO:0005737">
    <property type="term" value="C:cytoplasm"/>
    <property type="evidence" value="ECO:0007669"/>
    <property type="project" value="UniProtKB-SubCell"/>
</dbReference>
<dbReference type="GO" id="GO:0005634">
    <property type="term" value="C:nucleus"/>
    <property type="evidence" value="ECO:0007669"/>
    <property type="project" value="UniProtKB-SubCell"/>
</dbReference>
<dbReference type="GO" id="GO:0046523">
    <property type="term" value="F:S-methyl-5-thioribose-1-phosphate isomerase activity"/>
    <property type="evidence" value="ECO:0000318"/>
    <property type="project" value="GO_Central"/>
</dbReference>
<dbReference type="GO" id="GO:0019509">
    <property type="term" value="P:L-methionine salvage from methylthioadenosine"/>
    <property type="evidence" value="ECO:0000318"/>
    <property type="project" value="GO_Central"/>
</dbReference>
<dbReference type="FunFam" id="1.20.120.420:FF:000004">
    <property type="entry name" value="Methylthioribose-1-phosphate isomerase"/>
    <property type="match status" value="1"/>
</dbReference>
<dbReference type="FunFam" id="3.40.50.10470:FF:000003">
    <property type="entry name" value="Methylthioribose-1-phosphate isomerase"/>
    <property type="match status" value="1"/>
</dbReference>
<dbReference type="Gene3D" id="1.20.120.420">
    <property type="entry name" value="translation initiation factor eif-2b, domain 1"/>
    <property type="match status" value="1"/>
</dbReference>
<dbReference type="Gene3D" id="3.40.50.10470">
    <property type="entry name" value="Translation initiation factor eif-2b, domain 2"/>
    <property type="match status" value="1"/>
</dbReference>
<dbReference type="HAMAP" id="MF_01678">
    <property type="entry name" value="Salvage_MtnA"/>
    <property type="match status" value="1"/>
</dbReference>
<dbReference type="InterPro" id="IPR000649">
    <property type="entry name" value="IF-2B-related"/>
</dbReference>
<dbReference type="InterPro" id="IPR005251">
    <property type="entry name" value="IF-M1Pi"/>
</dbReference>
<dbReference type="InterPro" id="IPR042529">
    <property type="entry name" value="IF_2B-like_C"/>
</dbReference>
<dbReference type="InterPro" id="IPR011559">
    <property type="entry name" value="Initiation_fac_2B_a/b/d"/>
</dbReference>
<dbReference type="InterPro" id="IPR027363">
    <property type="entry name" value="M1Pi_N"/>
</dbReference>
<dbReference type="InterPro" id="IPR037171">
    <property type="entry name" value="NagB/RpiA_transferase-like"/>
</dbReference>
<dbReference type="NCBIfam" id="TIGR00524">
    <property type="entry name" value="eIF-2B_rel"/>
    <property type="match status" value="1"/>
</dbReference>
<dbReference type="NCBIfam" id="NF004326">
    <property type="entry name" value="PRK05720.1"/>
    <property type="match status" value="1"/>
</dbReference>
<dbReference type="NCBIfam" id="TIGR00512">
    <property type="entry name" value="salvage_mtnA"/>
    <property type="match status" value="1"/>
</dbReference>
<dbReference type="PANTHER" id="PTHR43475">
    <property type="entry name" value="METHYLTHIORIBOSE-1-PHOSPHATE ISOMERASE"/>
    <property type="match status" value="1"/>
</dbReference>
<dbReference type="PANTHER" id="PTHR43475:SF1">
    <property type="entry name" value="METHYLTHIORIBOSE-1-PHOSPHATE ISOMERASE"/>
    <property type="match status" value="1"/>
</dbReference>
<dbReference type="Pfam" id="PF01008">
    <property type="entry name" value="IF-2B"/>
    <property type="match status" value="1"/>
</dbReference>
<dbReference type="SUPFAM" id="SSF100950">
    <property type="entry name" value="NagB/RpiA/CoA transferase-like"/>
    <property type="match status" value="1"/>
</dbReference>
<protein>
    <recommendedName>
        <fullName evidence="1">Methylthioribose-1-phosphate isomerase</fullName>
        <shortName evidence="1">M1Pi</shortName>
        <shortName evidence="1">MTR-1-P isomerase</shortName>
        <ecNumber evidence="1">5.3.1.23</ecNumber>
    </recommendedName>
    <alternativeName>
        <fullName evidence="1">S-methyl-5-thioribose-1-phosphate isomerase</fullName>
    </alternativeName>
    <alternativeName>
        <fullName evidence="1">Translation initiation factor eIF-2B subunit alpha/beta/delta-like protein</fullName>
    </alternativeName>
</protein>
<keyword id="KW-0028">Amino-acid biosynthesis</keyword>
<keyword id="KW-0963">Cytoplasm</keyword>
<keyword id="KW-0413">Isomerase</keyword>
<keyword id="KW-0486">Methionine biosynthesis</keyword>
<keyword id="KW-0539">Nucleus</keyword>
<keyword id="KW-1185">Reference proteome</keyword>
<feature type="chain" id="PRO_0000401971" description="Methylthioribose-1-phosphate isomerase">
    <location>
        <begin position="1"/>
        <end position="353"/>
    </location>
</feature>
<feature type="active site" description="Proton donor" evidence="1">
    <location>
        <position position="241"/>
    </location>
</feature>
<feature type="site" description="Transition state stabilizer" evidence="1">
    <location>
        <position position="161"/>
    </location>
</feature>
<name>MTNA_DANRE</name>